<proteinExistence type="inferred from homology"/>
<dbReference type="EMBL" id="CP000002">
    <property type="protein sequence ID" value="AAU24585.1"/>
    <property type="molecule type" value="Genomic_DNA"/>
</dbReference>
<dbReference type="EMBL" id="AE017333">
    <property type="protein sequence ID" value="AAU41944.1"/>
    <property type="molecule type" value="Genomic_DNA"/>
</dbReference>
<dbReference type="RefSeq" id="WP_009329370.1">
    <property type="nucleotide sequence ID" value="NC_006322.1"/>
</dbReference>
<dbReference type="SMR" id="Q65G70"/>
<dbReference type="STRING" id="279010.BL00413"/>
<dbReference type="KEGG" id="bld:BLi03080"/>
<dbReference type="KEGG" id="bli:BL00413"/>
<dbReference type="eggNOG" id="COG2220">
    <property type="taxonomic scope" value="Bacteria"/>
</dbReference>
<dbReference type="HOGENOM" id="CLU_070010_4_1_9"/>
<dbReference type="Proteomes" id="UP000000606">
    <property type="component" value="Chromosome"/>
</dbReference>
<dbReference type="GO" id="GO:0016787">
    <property type="term" value="F:hydrolase activity"/>
    <property type="evidence" value="ECO:0007669"/>
    <property type="project" value="UniProtKB-UniRule"/>
</dbReference>
<dbReference type="Gene3D" id="3.60.15.10">
    <property type="entry name" value="Ribonuclease Z/Hydroxyacylglutathione hydrolase-like"/>
    <property type="match status" value="1"/>
</dbReference>
<dbReference type="HAMAP" id="MF_00457">
    <property type="entry name" value="UPF0173"/>
    <property type="match status" value="1"/>
</dbReference>
<dbReference type="InterPro" id="IPR001279">
    <property type="entry name" value="Metallo-B-lactamas"/>
</dbReference>
<dbReference type="InterPro" id="IPR036866">
    <property type="entry name" value="RibonucZ/Hydroxyglut_hydro"/>
</dbReference>
<dbReference type="InterPro" id="IPR022877">
    <property type="entry name" value="UPF0173"/>
</dbReference>
<dbReference type="NCBIfam" id="NF001911">
    <property type="entry name" value="PRK00685.1"/>
    <property type="match status" value="1"/>
</dbReference>
<dbReference type="PANTHER" id="PTHR39189">
    <property type="entry name" value="UPF0173 METAL-DEPENDENT HYDROLASE YTKL"/>
    <property type="match status" value="1"/>
</dbReference>
<dbReference type="PANTHER" id="PTHR39189:SF1">
    <property type="entry name" value="UPF0173 METAL-DEPENDENT HYDROLASE YTKL"/>
    <property type="match status" value="1"/>
</dbReference>
<dbReference type="Pfam" id="PF12706">
    <property type="entry name" value="Lactamase_B_2"/>
    <property type="match status" value="1"/>
</dbReference>
<dbReference type="SMART" id="SM00849">
    <property type="entry name" value="Lactamase_B"/>
    <property type="match status" value="1"/>
</dbReference>
<dbReference type="SUPFAM" id="SSF56281">
    <property type="entry name" value="Metallo-hydrolase/oxidoreductase"/>
    <property type="match status" value="1"/>
</dbReference>
<organism>
    <name type="scientific">Bacillus licheniformis (strain ATCC 14580 / DSM 13 / JCM 2505 / CCUG 7422 / NBRC 12200 / NCIMB 9375 / NCTC 10341 / NRRL NRS-1264 / Gibson 46)</name>
    <dbReference type="NCBI Taxonomy" id="279010"/>
    <lineage>
        <taxon>Bacteria</taxon>
        <taxon>Bacillati</taxon>
        <taxon>Bacillota</taxon>
        <taxon>Bacilli</taxon>
        <taxon>Bacillales</taxon>
        <taxon>Bacillaceae</taxon>
        <taxon>Bacillus</taxon>
    </lineage>
</organism>
<comment type="similarity">
    <text evidence="1">Belongs to the UPF0173 family.</text>
</comment>
<protein>
    <recommendedName>
        <fullName evidence="1">UPF0173 metal-dependent hydrolase BLi03080/BL00413</fullName>
    </recommendedName>
</protein>
<accession>Q65G70</accession>
<accession>Q62RM5</accession>
<feature type="chain" id="PRO_1000013500" description="UPF0173 metal-dependent hydrolase BLi03080/BL00413">
    <location>
        <begin position="1"/>
        <end position="228"/>
    </location>
</feature>
<keyword id="KW-0378">Hydrolase</keyword>
<keyword id="KW-1185">Reference proteome</keyword>
<gene>
    <name type="ordered locus">BLi03080</name>
    <name type="ordered locus">BL00413</name>
</gene>
<sequence>MKVAYHGHSVVTVDTGDHQLIFDPFITGNSLTDLKPEDVKADVILLTHGHNDHVGDTIEIAKRNNSLVVAPNELAVYLGWKGLNVHPMHIGGSHQFDFGKVKLTQAFHGSAYTEEDSQKIVYTGMPAGILLTVEGRTIFHAGDTGLFSDMKLIGELNHIDLAFLPIGDNFTMGPEDAKLAAEWLRAKQVVPVHYSTFPVIEQDPHAFADSLPGGVGKVLEVGESIEFK</sequence>
<name>Y3080_BACLD</name>
<reference key="1">
    <citation type="journal article" date="2004" name="J. Mol. Microbiol. Biotechnol.">
        <title>The complete genome sequence of Bacillus licheniformis DSM13, an organism with great industrial potential.</title>
        <authorList>
            <person name="Veith B."/>
            <person name="Herzberg C."/>
            <person name="Steckel S."/>
            <person name="Feesche J."/>
            <person name="Maurer K.H."/>
            <person name="Ehrenreich P."/>
            <person name="Baeumer S."/>
            <person name="Henne A."/>
            <person name="Liesegang H."/>
            <person name="Merkl R."/>
            <person name="Ehrenreich A."/>
            <person name="Gottschalk G."/>
        </authorList>
    </citation>
    <scope>NUCLEOTIDE SEQUENCE [LARGE SCALE GENOMIC DNA]</scope>
    <source>
        <strain>ATCC 14580 / DSM 13 / JCM 2505 / CCUG 7422 / NBRC 12200 / NCIMB 9375 / NCTC 10341 / NRRL NRS-1264 / Gibson 46</strain>
    </source>
</reference>
<reference key="2">
    <citation type="journal article" date="2004" name="Genome Biol.">
        <title>Complete genome sequence of the industrial bacterium Bacillus licheniformis and comparisons with closely related Bacillus species.</title>
        <authorList>
            <person name="Rey M.W."/>
            <person name="Ramaiya P."/>
            <person name="Nelson B.A."/>
            <person name="Brody-Karpin S.D."/>
            <person name="Zaretsky E.J."/>
            <person name="Tang M."/>
            <person name="Lopez de Leon A."/>
            <person name="Xiang H."/>
            <person name="Gusti V."/>
            <person name="Clausen I.G."/>
            <person name="Olsen P.B."/>
            <person name="Rasmussen M.D."/>
            <person name="Andersen J.T."/>
            <person name="Joergensen P.L."/>
            <person name="Larsen T.S."/>
            <person name="Sorokin A."/>
            <person name="Bolotin A."/>
            <person name="Lapidus A."/>
            <person name="Galleron N."/>
            <person name="Ehrlich S.D."/>
            <person name="Berka R.M."/>
        </authorList>
    </citation>
    <scope>NUCLEOTIDE SEQUENCE [LARGE SCALE GENOMIC DNA]</scope>
    <source>
        <strain>ATCC 14580 / DSM 13 / JCM 2505 / CCUG 7422 / NBRC 12200 / NCIMB 9375 / NCTC 10341 / NRRL NRS-1264 / Gibson 46</strain>
    </source>
</reference>
<evidence type="ECO:0000255" key="1">
    <source>
        <dbReference type="HAMAP-Rule" id="MF_00457"/>
    </source>
</evidence>